<proteinExistence type="inferred from homology"/>
<feature type="chain" id="PRO_0000072957" description="Glycine--tRNA ligase">
    <location>
        <begin position="1"/>
        <end position="506"/>
    </location>
</feature>
<feature type="binding site" evidence="1">
    <location>
        <position position="99"/>
    </location>
    <ligand>
        <name>substrate</name>
    </ligand>
</feature>
<feature type="binding site" evidence="1">
    <location>
        <position position="189"/>
    </location>
    <ligand>
        <name>substrate</name>
    </ligand>
</feature>
<feature type="binding site" evidence="1">
    <location>
        <begin position="221"/>
        <end position="223"/>
    </location>
    <ligand>
        <name>ATP</name>
        <dbReference type="ChEBI" id="CHEBI:30616"/>
    </ligand>
</feature>
<feature type="binding site" evidence="1">
    <location>
        <begin position="231"/>
        <end position="236"/>
    </location>
    <ligand>
        <name>ATP</name>
        <dbReference type="ChEBI" id="CHEBI:30616"/>
    </ligand>
</feature>
<feature type="binding site" evidence="1">
    <location>
        <begin position="236"/>
        <end position="240"/>
    </location>
    <ligand>
        <name>substrate</name>
    </ligand>
</feature>
<feature type="binding site" evidence="1">
    <location>
        <begin position="306"/>
        <end position="307"/>
    </location>
    <ligand>
        <name>ATP</name>
        <dbReference type="ChEBI" id="CHEBI:30616"/>
    </ligand>
</feature>
<feature type="binding site" evidence="1">
    <location>
        <begin position="361"/>
        <end position="365"/>
    </location>
    <ligand>
        <name>substrate</name>
    </ligand>
</feature>
<feature type="binding site" evidence="1">
    <location>
        <begin position="365"/>
        <end position="368"/>
    </location>
    <ligand>
        <name>ATP</name>
        <dbReference type="ChEBI" id="CHEBI:30616"/>
    </ligand>
</feature>
<comment type="function">
    <text evidence="1">Catalyzes the attachment of glycine to tRNA(Gly).</text>
</comment>
<comment type="catalytic activity">
    <reaction evidence="1">
        <text>tRNA(Gly) + glycine + ATP = glycyl-tRNA(Gly) + AMP + diphosphate</text>
        <dbReference type="Rhea" id="RHEA:16013"/>
        <dbReference type="Rhea" id="RHEA-COMP:9664"/>
        <dbReference type="Rhea" id="RHEA-COMP:9683"/>
        <dbReference type="ChEBI" id="CHEBI:30616"/>
        <dbReference type="ChEBI" id="CHEBI:33019"/>
        <dbReference type="ChEBI" id="CHEBI:57305"/>
        <dbReference type="ChEBI" id="CHEBI:78442"/>
        <dbReference type="ChEBI" id="CHEBI:78522"/>
        <dbReference type="ChEBI" id="CHEBI:456215"/>
        <dbReference type="EC" id="6.1.1.14"/>
    </reaction>
</comment>
<comment type="subunit">
    <text evidence="1">Homodimer.</text>
</comment>
<comment type="subcellular location">
    <subcellularLocation>
        <location evidence="1">Cytoplasm</location>
    </subcellularLocation>
</comment>
<comment type="similarity">
    <text evidence="1">Belongs to the class-II aminoacyl-tRNA synthetase family.</text>
</comment>
<comment type="sequence caution" evidence="2">
    <conflict type="erroneous initiation">
        <sequence resource="EMBL-CDS" id="AAF11606"/>
    </conflict>
</comment>
<sequence>MPATSMEELVSLCKRRGFIFQGSEIYGGLQGFYDYGPLGVELKNNIKAAWWRSNVYERDDMEGLDASIIMHRMVLRHSGHEATFSDPMIDNKKNNKRYRLDHLLKDQKADVQAKVAEIMGESADNFAALVAALNAKPAQASAAFKEAGVRDPFSGEVGEWTDPKPFNMMFRTTIGPVADEESYGYLRPETAQGIFTNFKNVVDSTSRRLPFGIAQIGKAFRNEITPRNFIFRVRELEQMEIEFFVTPGTDEEWHEHWLEKRLKWWEDQGVPREKIEILDVPKEDLAHYSKRTYDLMYDYPTLGHEEIEGIANRSDYDLGSHTKSQSELGLVAKVEENNDSIAKLTIPHPETNKPVVPFVIEPSAGVDRAMLAVLSEAFTKETLENGNERIVLKLKPHLAPIKVAVIPLARNREEITDVAKAIKAELQGLGLGRVLYEDSGNIGKAYRRHDEVGTPYCVTVDFDTVGLGENTDESLKDTVTVRDRDTLAQERVKISELAGWIQAKLR</sequence>
<accession>Q9RSR5</accession>
<name>SYG_DEIRA</name>
<organism>
    <name type="scientific">Deinococcus radiodurans (strain ATCC 13939 / DSM 20539 / JCM 16871 / CCUG 27074 / LMG 4051 / NBRC 15346 / NCIMB 9279 / VKM B-1422 / R1)</name>
    <dbReference type="NCBI Taxonomy" id="243230"/>
    <lineage>
        <taxon>Bacteria</taxon>
        <taxon>Thermotogati</taxon>
        <taxon>Deinococcota</taxon>
        <taxon>Deinococci</taxon>
        <taxon>Deinococcales</taxon>
        <taxon>Deinococcaceae</taxon>
        <taxon>Deinococcus</taxon>
    </lineage>
</organism>
<keyword id="KW-0030">Aminoacyl-tRNA synthetase</keyword>
<keyword id="KW-0067">ATP-binding</keyword>
<keyword id="KW-0963">Cytoplasm</keyword>
<keyword id="KW-0436">Ligase</keyword>
<keyword id="KW-0547">Nucleotide-binding</keyword>
<keyword id="KW-0648">Protein biosynthesis</keyword>
<keyword id="KW-1185">Reference proteome</keyword>
<reference key="1">
    <citation type="journal article" date="1999" name="Science">
        <title>Genome sequence of the radioresistant bacterium Deinococcus radiodurans R1.</title>
        <authorList>
            <person name="White O."/>
            <person name="Eisen J.A."/>
            <person name="Heidelberg J.F."/>
            <person name="Hickey E.K."/>
            <person name="Peterson J.D."/>
            <person name="Dodson R.J."/>
            <person name="Haft D.H."/>
            <person name="Gwinn M.L."/>
            <person name="Nelson W.C."/>
            <person name="Richardson D.L."/>
            <person name="Moffat K.S."/>
            <person name="Qin H."/>
            <person name="Jiang L."/>
            <person name="Pamphile W."/>
            <person name="Crosby M."/>
            <person name="Shen M."/>
            <person name="Vamathevan J.J."/>
            <person name="Lam P."/>
            <person name="McDonald L.A."/>
            <person name="Utterback T.R."/>
            <person name="Zalewski C."/>
            <person name="Makarova K.S."/>
            <person name="Aravind L."/>
            <person name="Daly M.J."/>
            <person name="Minton K.W."/>
            <person name="Fleischmann R.D."/>
            <person name="Ketchum K.A."/>
            <person name="Nelson K.E."/>
            <person name="Salzberg S.L."/>
            <person name="Smith H.O."/>
            <person name="Venter J.C."/>
            <person name="Fraser C.M."/>
        </authorList>
    </citation>
    <scope>NUCLEOTIDE SEQUENCE [LARGE SCALE GENOMIC DNA]</scope>
    <source>
        <strain>ATCC 13939 / DSM 20539 / JCM 16871 / CCUG 27074 / LMG 4051 / NBRC 15346 / NCIMB 9279 / VKM B-1422 / R1</strain>
    </source>
</reference>
<protein>
    <recommendedName>
        <fullName evidence="1">Glycine--tRNA ligase</fullName>
        <ecNumber evidence="1">6.1.1.14</ecNumber>
    </recommendedName>
    <alternativeName>
        <fullName evidence="1">Glycyl-tRNA synthetase</fullName>
        <shortName evidence="1">GlyRS</shortName>
    </alternativeName>
</protein>
<gene>
    <name evidence="1" type="primary">glyQS</name>
    <name type="synonym">glyS</name>
    <name type="ordered locus">DR_2059</name>
</gene>
<dbReference type="EC" id="6.1.1.14" evidence="1"/>
<dbReference type="EMBL" id="AE000513">
    <property type="protein sequence ID" value="AAF11606.1"/>
    <property type="status" value="ALT_INIT"/>
    <property type="molecule type" value="Genomic_DNA"/>
</dbReference>
<dbReference type="PIR" id="C75320">
    <property type="entry name" value="C75320"/>
</dbReference>
<dbReference type="RefSeq" id="NP_295782.1">
    <property type="nucleotide sequence ID" value="NC_001263.1"/>
</dbReference>
<dbReference type="RefSeq" id="WP_027479959.1">
    <property type="nucleotide sequence ID" value="NC_001263.1"/>
</dbReference>
<dbReference type="SMR" id="Q9RSR5"/>
<dbReference type="STRING" id="243230.DR_2059"/>
<dbReference type="PaxDb" id="243230-DR_2059"/>
<dbReference type="EnsemblBacteria" id="AAF11606">
    <property type="protein sequence ID" value="AAF11606"/>
    <property type="gene ID" value="DR_2059"/>
</dbReference>
<dbReference type="GeneID" id="69518302"/>
<dbReference type="KEGG" id="dra:DR_2059"/>
<dbReference type="PATRIC" id="fig|243230.17.peg.2284"/>
<dbReference type="eggNOG" id="COG0423">
    <property type="taxonomic scope" value="Bacteria"/>
</dbReference>
<dbReference type="HOGENOM" id="CLU_015515_2_1_0"/>
<dbReference type="InParanoid" id="Q9RSR5"/>
<dbReference type="OrthoDB" id="9760853at2"/>
<dbReference type="Proteomes" id="UP000002524">
    <property type="component" value="Chromosome 1"/>
</dbReference>
<dbReference type="GO" id="GO:0005737">
    <property type="term" value="C:cytoplasm"/>
    <property type="evidence" value="ECO:0000318"/>
    <property type="project" value="GO_Central"/>
</dbReference>
<dbReference type="GO" id="GO:0005524">
    <property type="term" value="F:ATP binding"/>
    <property type="evidence" value="ECO:0007669"/>
    <property type="project" value="UniProtKB-UniRule"/>
</dbReference>
<dbReference type="GO" id="GO:0004820">
    <property type="term" value="F:glycine-tRNA ligase activity"/>
    <property type="evidence" value="ECO:0000250"/>
    <property type="project" value="UniProtKB"/>
</dbReference>
<dbReference type="GO" id="GO:0046983">
    <property type="term" value="F:protein dimerization activity"/>
    <property type="evidence" value="ECO:0000250"/>
    <property type="project" value="UniProtKB"/>
</dbReference>
<dbReference type="GO" id="GO:0006426">
    <property type="term" value="P:glycyl-tRNA aminoacylation"/>
    <property type="evidence" value="ECO:0000318"/>
    <property type="project" value="GO_Central"/>
</dbReference>
<dbReference type="CDD" id="cd00774">
    <property type="entry name" value="GlyRS-like_core"/>
    <property type="match status" value="1"/>
</dbReference>
<dbReference type="CDD" id="cd00858">
    <property type="entry name" value="GlyRS_anticodon"/>
    <property type="match status" value="1"/>
</dbReference>
<dbReference type="FunFam" id="3.30.40.230:FF:000011">
    <property type="entry name" value="Glycine--tRNA ligase"/>
    <property type="match status" value="1"/>
</dbReference>
<dbReference type="Gene3D" id="3.30.40.230">
    <property type="match status" value="1"/>
</dbReference>
<dbReference type="Gene3D" id="3.40.50.800">
    <property type="entry name" value="Anticodon-binding domain"/>
    <property type="match status" value="1"/>
</dbReference>
<dbReference type="Gene3D" id="3.30.930.10">
    <property type="entry name" value="Bira Bifunctional Protein, Domain 2"/>
    <property type="match status" value="1"/>
</dbReference>
<dbReference type="HAMAP" id="MF_00253_B">
    <property type="entry name" value="Gly_tRNA_synth_B"/>
    <property type="match status" value="1"/>
</dbReference>
<dbReference type="InterPro" id="IPR002314">
    <property type="entry name" value="aa-tRNA-synt_IIb"/>
</dbReference>
<dbReference type="InterPro" id="IPR006195">
    <property type="entry name" value="aa-tRNA-synth_II"/>
</dbReference>
<dbReference type="InterPro" id="IPR045864">
    <property type="entry name" value="aa-tRNA-synth_II/BPL/LPL"/>
</dbReference>
<dbReference type="InterPro" id="IPR004154">
    <property type="entry name" value="Anticodon-bd"/>
</dbReference>
<dbReference type="InterPro" id="IPR036621">
    <property type="entry name" value="Anticodon-bd_dom_sf"/>
</dbReference>
<dbReference type="InterPro" id="IPR027031">
    <property type="entry name" value="Gly-tRNA_synthase/POLG2"/>
</dbReference>
<dbReference type="InterPro" id="IPR022961">
    <property type="entry name" value="Gly_tRNA_ligase_bac"/>
</dbReference>
<dbReference type="InterPro" id="IPR033731">
    <property type="entry name" value="GlyRS-like_core"/>
</dbReference>
<dbReference type="InterPro" id="IPR002315">
    <property type="entry name" value="tRNA-synt_gly"/>
</dbReference>
<dbReference type="NCBIfam" id="TIGR00389">
    <property type="entry name" value="glyS_dimeric"/>
    <property type="match status" value="1"/>
</dbReference>
<dbReference type="NCBIfam" id="NF003211">
    <property type="entry name" value="PRK04173.1"/>
    <property type="match status" value="1"/>
</dbReference>
<dbReference type="PANTHER" id="PTHR10745:SF8">
    <property type="entry name" value="DNA POLYMERASE SUBUNIT GAMMA-2, MITOCHONDRIAL"/>
    <property type="match status" value="1"/>
</dbReference>
<dbReference type="PANTHER" id="PTHR10745">
    <property type="entry name" value="GLYCYL-TRNA SYNTHETASE/DNA POLYMERASE SUBUNIT GAMMA-2"/>
    <property type="match status" value="1"/>
</dbReference>
<dbReference type="Pfam" id="PF03129">
    <property type="entry name" value="HGTP_anticodon"/>
    <property type="match status" value="1"/>
</dbReference>
<dbReference type="Pfam" id="PF00587">
    <property type="entry name" value="tRNA-synt_2b"/>
    <property type="match status" value="1"/>
</dbReference>
<dbReference type="PRINTS" id="PR01043">
    <property type="entry name" value="TRNASYNTHGLY"/>
</dbReference>
<dbReference type="SUPFAM" id="SSF52954">
    <property type="entry name" value="Class II aaRS ABD-related"/>
    <property type="match status" value="1"/>
</dbReference>
<dbReference type="SUPFAM" id="SSF55681">
    <property type="entry name" value="Class II aaRS and biotin synthetases"/>
    <property type="match status" value="1"/>
</dbReference>
<dbReference type="PROSITE" id="PS50862">
    <property type="entry name" value="AA_TRNA_LIGASE_II"/>
    <property type="match status" value="1"/>
</dbReference>
<evidence type="ECO:0000255" key="1">
    <source>
        <dbReference type="HAMAP-Rule" id="MF_00253"/>
    </source>
</evidence>
<evidence type="ECO:0000305" key="2"/>